<comment type="function">
    <text>Cytochrome c2 is found mainly in purple, non-sulfur, photosynthetic bacteria where it functions as the electron donor to the oxidized bacteriochlorophyll in the photophosphorylation pathway. However, it may also have a role in the respiratory chain and is found in some non-photosynthetic bacteria.</text>
</comment>
<comment type="PTM">
    <text evidence="2">Binds 1 heme c group covalently per subunit.</text>
</comment>
<comment type="similarity">
    <text evidence="6">Belongs to the cytochrome c family.</text>
</comment>
<gene>
    <name type="primary">cycA</name>
</gene>
<sequence length="127" mass="13665">MRKLVFGLFVLAASVAPAAAQDAASGEQVFKQCLVCHSIGPGAKNKVGPVLNGLFGRHSGTIEGFAYSDANKNSGITWTEEVFREYIRDPKAKIPGTKMIFAGVKDEQKVSDLIAYIKQFNADGSKK</sequence>
<organism>
    <name type="scientific">Blastochloris viridis</name>
    <name type="common">Rhodopseudomonas viridis</name>
    <dbReference type="NCBI Taxonomy" id="1079"/>
    <lineage>
        <taxon>Bacteria</taxon>
        <taxon>Pseudomonadati</taxon>
        <taxon>Pseudomonadota</taxon>
        <taxon>Alphaproteobacteria</taxon>
        <taxon>Hyphomicrobiales</taxon>
        <taxon>Blastochloridaceae</taxon>
        <taxon>Blastochloris</taxon>
    </lineage>
</organism>
<keyword id="KW-0002">3D-structure</keyword>
<keyword id="KW-0903">Direct protein sequencing</keyword>
<keyword id="KW-0249">Electron transport</keyword>
<keyword id="KW-0349">Heme</keyword>
<keyword id="KW-0408">Iron</keyword>
<keyword id="KW-0479">Metal-binding</keyword>
<keyword id="KW-0602">Photosynthesis</keyword>
<keyword id="KW-0873">Pyrrolidone carboxylic acid</keyword>
<keyword id="KW-0732">Signal</keyword>
<keyword id="KW-0813">Transport</keyword>
<accession>P00083</accession>
<feature type="signal peptide" evidence="1">
    <location>
        <begin position="1"/>
        <end position="20"/>
    </location>
</feature>
<feature type="chain" id="PRO_0000006500" description="Cytochrome c2" evidence="1">
    <location>
        <begin position="21"/>
        <end position="127"/>
    </location>
</feature>
<feature type="binding site" description="covalent" evidence="2 7">
    <location>
        <position position="33"/>
    </location>
    <ligand>
        <name>heme c</name>
        <dbReference type="ChEBI" id="CHEBI:61717"/>
    </ligand>
</feature>
<feature type="binding site" description="covalent" evidence="2 7">
    <location>
        <position position="36"/>
    </location>
    <ligand>
        <name>heme c</name>
        <dbReference type="ChEBI" id="CHEBI:61717"/>
    </ligand>
</feature>
<feature type="binding site" description="axial binding residue" evidence="2 7">
    <location>
        <position position="37"/>
    </location>
    <ligand>
        <name>heme c</name>
        <dbReference type="ChEBI" id="CHEBI:61717"/>
    </ligand>
    <ligandPart>
        <name>Fe</name>
        <dbReference type="ChEBI" id="CHEBI:18248"/>
    </ligandPart>
</feature>
<feature type="binding site" description="axial binding residue" evidence="2 7">
    <location>
        <position position="99"/>
    </location>
    <ligand>
        <name>heme c</name>
        <dbReference type="ChEBI" id="CHEBI:61717"/>
    </ligand>
    <ligandPart>
        <name>Fe</name>
        <dbReference type="ChEBI" id="CHEBI:18248"/>
    </ligandPart>
</feature>
<feature type="modified residue" description="Pyrrolidone carboxylic acid" evidence="1">
    <location>
        <position position="21"/>
    </location>
</feature>
<feature type="sequence conflict" description="In Ref. 2; AA sequence." evidence="6" ref="2">
    <original>A</original>
    <variation>S</variation>
    <location>
        <position position="66"/>
    </location>
</feature>
<feature type="sequence conflict" description="In Ref. 2; AA sequence." evidence="6" ref="2">
    <original>V</original>
    <variation>I</variation>
    <location>
        <position position="104"/>
    </location>
</feature>
<feature type="sequence conflict" description="In Ref. 2; AA sequence." evidence="6" ref="2">
    <original>I</original>
    <variation>L</variation>
    <location>
        <position position="117"/>
    </location>
</feature>
<feature type="helix" evidence="8">
    <location>
        <begin position="23"/>
        <end position="34"/>
    </location>
</feature>
<feature type="strand" evidence="9">
    <location>
        <begin position="62"/>
        <end position="64"/>
    </location>
</feature>
<feature type="helix" evidence="8">
    <location>
        <begin position="69"/>
        <end position="72"/>
    </location>
</feature>
<feature type="helix" evidence="8">
    <location>
        <begin position="80"/>
        <end position="88"/>
    </location>
</feature>
<feature type="helix" evidence="8">
    <location>
        <begin position="90"/>
        <end position="93"/>
    </location>
</feature>
<feature type="helix" evidence="8">
    <location>
        <begin position="107"/>
        <end position="118"/>
    </location>
</feature>
<name>CYC2_BLAVI</name>
<protein>
    <recommendedName>
        <fullName evidence="3 4 5">Cytochrome c2</fullName>
    </recommendedName>
</protein>
<dbReference type="EMBL" id="M59302">
    <property type="protein sequence ID" value="AAA26092.1"/>
    <property type="molecule type" value="Genomic_DNA"/>
</dbReference>
<dbReference type="PIR" id="A36720">
    <property type="entry name" value="CCRF2V"/>
</dbReference>
<dbReference type="RefSeq" id="WP_055036459.1">
    <property type="nucleotide sequence ID" value="NZ_AP014854.2"/>
</dbReference>
<dbReference type="PDB" id="1CO6">
    <property type="method" value="X-ray"/>
    <property type="resolution" value="1.60 A"/>
    <property type="chains" value="A=21-127"/>
</dbReference>
<dbReference type="PDB" id="1CRY">
    <property type="method" value="X-ray"/>
    <property type="resolution" value="3.00 A"/>
    <property type="chains" value="A=21-127"/>
</dbReference>
<dbReference type="PDB" id="1IO3">
    <property type="method" value="X-ray"/>
    <property type="resolution" value="1.90 A"/>
    <property type="chains" value="A=21-127"/>
</dbReference>
<dbReference type="PDBsum" id="1CO6"/>
<dbReference type="PDBsum" id="1CRY"/>
<dbReference type="PDBsum" id="1IO3"/>
<dbReference type="SMR" id="P00083"/>
<dbReference type="STRING" id="1079.BVIR_718"/>
<dbReference type="OrthoDB" id="9805828at2"/>
<dbReference type="EvolutionaryTrace" id="P00083"/>
<dbReference type="GO" id="GO:0009055">
    <property type="term" value="F:electron transfer activity"/>
    <property type="evidence" value="ECO:0007669"/>
    <property type="project" value="InterPro"/>
</dbReference>
<dbReference type="GO" id="GO:0020037">
    <property type="term" value="F:heme binding"/>
    <property type="evidence" value="ECO:0007669"/>
    <property type="project" value="InterPro"/>
</dbReference>
<dbReference type="GO" id="GO:0046872">
    <property type="term" value="F:metal ion binding"/>
    <property type="evidence" value="ECO:0007669"/>
    <property type="project" value="UniProtKB-KW"/>
</dbReference>
<dbReference type="GO" id="GO:0015979">
    <property type="term" value="P:photosynthesis"/>
    <property type="evidence" value="ECO:0007669"/>
    <property type="project" value="UniProtKB-KW"/>
</dbReference>
<dbReference type="FunFam" id="1.10.760.10:FF:000001">
    <property type="entry name" value="Cytochrome c iso-1"/>
    <property type="match status" value="1"/>
</dbReference>
<dbReference type="Gene3D" id="1.10.760.10">
    <property type="entry name" value="Cytochrome c-like domain"/>
    <property type="match status" value="1"/>
</dbReference>
<dbReference type="InterPro" id="IPR009056">
    <property type="entry name" value="Cyt_c-like_dom"/>
</dbReference>
<dbReference type="InterPro" id="IPR036909">
    <property type="entry name" value="Cyt_c-like_dom_sf"/>
</dbReference>
<dbReference type="InterPro" id="IPR002327">
    <property type="entry name" value="Cyt_c_1A/1B"/>
</dbReference>
<dbReference type="PANTHER" id="PTHR11961">
    <property type="entry name" value="CYTOCHROME C"/>
    <property type="match status" value="1"/>
</dbReference>
<dbReference type="Pfam" id="PF00034">
    <property type="entry name" value="Cytochrom_C"/>
    <property type="match status" value="1"/>
</dbReference>
<dbReference type="PRINTS" id="PR00604">
    <property type="entry name" value="CYTCHRMECIAB"/>
</dbReference>
<dbReference type="SUPFAM" id="SSF46626">
    <property type="entry name" value="Cytochrome c"/>
    <property type="match status" value="1"/>
</dbReference>
<dbReference type="PROSITE" id="PS51007">
    <property type="entry name" value="CYTC"/>
    <property type="match status" value="1"/>
</dbReference>
<reference key="1">
    <citation type="journal article" date="1990" name="J. Bacteriol.">
        <title>Sequence analysis and transcriptional organization of the Rhodopseudomonas viridis cytochrome c2 gene.</title>
        <authorList>
            <person name="Grisshammer R."/>
            <person name="Wiessner C."/>
            <person name="Michel H."/>
        </authorList>
    </citation>
    <scope>NUCLEOTIDE SEQUENCE [GENOMIC DNA]</scope>
    <source>
        <strain>ATCC 19567 / DSM 133 / F</strain>
    </source>
</reference>
<reference key="2">
    <citation type="journal article" date="1976" name="Proc. Natl. Acad. Sci. U.S.A.">
        <title>Primary structure determination of two cytochromes c2: close similarity to functionally unrelated mitochondrial cytochrome C.</title>
        <authorList>
            <person name="Ambler R.P."/>
            <person name="Meyer T.E."/>
            <person name="Kamen M.D."/>
        </authorList>
    </citation>
    <scope>PROTEIN SEQUENCE OF 21-127</scope>
    <scope>PYROGLUTAMATE FORMATION AT GLN-21</scope>
</reference>
<reference key="3">
    <citation type="submission" date="1977-06" db="PIR data bank">
        <authorList>
            <person name="Ambler R.P."/>
        </authorList>
    </citation>
    <scope>SEQUENCE REVISION TO 34</scope>
</reference>
<reference evidence="7" key="4">
    <citation type="journal article" date="1995" name="J. Mol. Biol.">
        <title>Refined crystal structure of ferrocytochrome c2 from Rhodopseudomonas viridis at 1.6-A resolution.</title>
        <authorList>
            <person name="Sogabe S."/>
            <person name="Miki M."/>
        </authorList>
    </citation>
    <scope>X-RAY CRYSTALLOGRAPHY (1.6 ANGSTROMS) OF 21-127 IN COMPLEX WITH HEME C</scope>
</reference>
<proteinExistence type="evidence at protein level"/>
<evidence type="ECO:0000269" key="1">
    <source>
    </source>
</evidence>
<evidence type="ECO:0000269" key="2">
    <source>
    </source>
</evidence>
<evidence type="ECO:0000303" key="3">
    <source>
    </source>
</evidence>
<evidence type="ECO:0000303" key="4">
    <source>
    </source>
</evidence>
<evidence type="ECO:0000303" key="5">
    <source>
    </source>
</evidence>
<evidence type="ECO:0000305" key="6"/>
<evidence type="ECO:0007744" key="7">
    <source>
        <dbReference type="PDB" id="1CO6"/>
    </source>
</evidence>
<evidence type="ECO:0007829" key="8">
    <source>
        <dbReference type="PDB" id="1CO6"/>
    </source>
</evidence>
<evidence type="ECO:0007829" key="9">
    <source>
        <dbReference type="PDB" id="1CRY"/>
    </source>
</evidence>